<gene>
    <name evidence="1" type="primary">trpD</name>
    <name type="ordered locus">Ccel_3215</name>
</gene>
<sequence>MIQEAIYQVINKQDLDLDKTIQVMEEIMEGRATNAQIGSFLTAMRMKGETIDEITACATVMRQKCKRIHPEKDVLDIVGTGGDEANTFNISTVSSFVVSAGGVPVAKHGGRSVSSKCGSADLLEALGINIALSAEQSAEILQKIGMCFMFAPTYHASMKYAAPVRKELSVRTIFNILGPLANPAGANMQLLGVYDENLVEPLARVLLNLGVKRAMVVHGHDGLDEVTLCNTTTICEVSNGNINSFFLSPEQLGFSRCLLKELVGGDPKKNASIALDILNGSKGPKRDIVVLNSALCLYMSYNQITLRDCVKMAEQLIDSGAAKAQLNKFIELSNSFNQEVK</sequence>
<evidence type="ECO:0000255" key="1">
    <source>
        <dbReference type="HAMAP-Rule" id="MF_00211"/>
    </source>
</evidence>
<reference key="1">
    <citation type="submission" date="2009-01" db="EMBL/GenBank/DDBJ databases">
        <title>Complete sequence of Clostridium cellulolyticum H10.</title>
        <authorList>
            <consortium name="US DOE Joint Genome Institute"/>
            <person name="Lucas S."/>
            <person name="Copeland A."/>
            <person name="Lapidus A."/>
            <person name="Glavina del Rio T."/>
            <person name="Dalin E."/>
            <person name="Tice H."/>
            <person name="Bruce D."/>
            <person name="Goodwin L."/>
            <person name="Pitluck S."/>
            <person name="Chertkov O."/>
            <person name="Saunders E."/>
            <person name="Brettin T."/>
            <person name="Detter J.C."/>
            <person name="Han C."/>
            <person name="Larimer F."/>
            <person name="Land M."/>
            <person name="Hauser L."/>
            <person name="Kyrpides N."/>
            <person name="Ivanova N."/>
            <person name="Zhou J."/>
            <person name="Richardson P."/>
        </authorList>
    </citation>
    <scope>NUCLEOTIDE SEQUENCE [LARGE SCALE GENOMIC DNA]</scope>
    <source>
        <strain>ATCC 35319 / DSM 5812 / JCM 6584 / H10</strain>
    </source>
</reference>
<comment type="function">
    <text evidence="1">Catalyzes the transfer of the phosphoribosyl group of 5-phosphorylribose-1-pyrophosphate (PRPP) to anthranilate to yield N-(5'-phosphoribosyl)-anthranilate (PRA).</text>
</comment>
<comment type="catalytic activity">
    <reaction evidence="1">
        <text>N-(5-phospho-beta-D-ribosyl)anthranilate + diphosphate = 5-phospho-alpha-D-ribose 1-diphosphate + anthranilate</text>
        <dbReference type="Rhea" id="RHEA:11768"/>
        <dbReference type="ChEBI" id="CHEBI:16567"/>
        <dbReference type="ChEBI" id="CHEBI:18277"/>
        <dbReference type="ChEBI" id="CHEBI:33019"/>
        <dbReference type="ChEBI" id="CHEBI:58017"/>
        <dbReference type="EC" id="2.4.2.18"/>
    </reaction>
</comment>
<comment type="cofactor">
    <cofactor evidence="1">
        <name>Mg(2+)</name>
        <dbReference type="ChEBI" id="CHEBI:18420"/>
    </cofactor>
    <text evidence="1">Binds 2 magnesium ions per monomer.</text>
</comment>
<comment type="pathway">
    <text evidence="1">Amino-acid biosynthesis; L-tryptophan biosynthesis; L-tryptophan from chorismate: step 2/5.</text>
</comment>
<comment type="subunit">
    <text evidence="1">Homodimer.</text>
</comment>
<comment type="similarity">
    <text evidence="1">Belongs to the anthranilate phosphoribosyltransferase family.</text>
</comment>
<keyword id="KW-0028">Amino-acid biosynthesis</keyword>
<keyword id="KW-0057">Aromatic amino acid biosynthesis</keyword>
<keyword id="KW-0328">Glycosyltransferase</keyword>
<keyword id="KW-0460">Magnesium</keyword>
<keyword id="KW-0479">Metal-binding</keyword>
<keyword id="KW-1185">Reference proteome</keyword>
<keyword id="KW-0808">Transferase</keyword>
<keyword id="KW-0822">Tryptophan biosynthesis</keyword>
<feature type="chain" id="PRO_1000198815" description="Anthranilate phosphoribosyltransferase">
    <location>
        <begin position="1"/>
        <end position="341"/>
    </location>
</feature>
<feature type="binding site" evidence="1">
    <location>
        <position position="79"/>
    </location>
    <ligand>
        <name>5-phospho-alpha-D-ribose 1-diphosphate</name>
        <dbReference type="ChEBI" id="CHEBI:58017"/>
    </ligand>
</feature>
<feature type="binding site" evidence="1">
    <location>
        <position position="79"/>
    </location>
    <ligand>
        <name>anthranilate</name>
        <dbReference type="ChEBI" id="CHEBI:16567"/>
        <label>1</label>
    </ligand>
</feature>
<feature type="binding site" evidence="1">
    <location>
        <begin position="82"/>
        <end position="83"/>
    </location>
    <ligand>
        <name>5-phospho-alpha-D-ribose 1-diphosphate</name>
        <dbReference type="ChEBI" id="CHEBI:58017"/>
    </ligand>
</feature>
<feature type="binding site" evidence="1">
    <location>
        <position position="87"/>
    </location>
    <ligand>
        <name>5-phospho-alpha-D-ribose 1-diphosphate</name>
        <dbReference type="ChEBI" id="CHEBI:58017"/>
    </ligand>
</feature>
<feature type="binding site" evidence="1">
    <location>
        <begin position="89"/>
        <end position="92"/>
    </location>
    <ligand>
        <name>5-phospho-alpha-D-ribose 1-diphosphate</name>
        <dbReference type="ChEBI" id="CHEBI:58017"/>
    </ligand>
</feature>
<feature type="binding site" evidence="1">
    <location>
        <position position="91"/>
    </location>
    <ligand>
        <name>Mg(2+)</name>
        <dbReference type="ChEBI" id="CHEBI:18420"/>
        <label>1</label>
    </ligand>
</feature>
<feature type="binding site" evidence="1">
    <location>
        <begin position="107"/>
        <end position="115"/>
    </location>
    <ligand>
        <name>5-phospho-alpha-D-ribose 1-diphosphate</name>
        <dbReference type="ChEBI" id="CHEBI:58017"/>
    </ligand>
</feature>
<feature type="binding site" evidence="1">
    <location>
        <position position="119"/>
    </location>
    <ligand>
        <name>5-phospho-alpha-D-ribose 1-diphosphate</name>
        <dbReference type="ChEBI" id="CHEBI:58017"/>
    </ligand>
</feature>
<feature type="binding site" evidence="1">
    <location>
        <position position="165"/>
    </location>
    <ligand>
        <name>anthranilate</name>
        <dbReference type="ChEBI" id="CHEBI:16567"/>
        <label>2</label>
    </ligand>
</feature>
<feature type="binding site" evidence="1">
    <location>
        <position position="224"/>
    </location>
    <ligand>
        <name>Mg(2+)</name>
        <dbReference type="ChEBI" id="CHEBI:18420"/>
        <label>2</label>
    </ligand>
</feature>
<feature type="binding site" evidence="1">
    <location>
        <position position="225"/>
    </location>
    <ligand>
        <name>Mg(2+)</name>
        <dbReference type="ChEBI" id="CHEBI:18420"/>
        <label>1</label>
    </ligand>
</feature>
<feature type="binding site" evidence="1">
    <location>
        <position position="225"/>
    </location>
    <ligand>
        <name>Mg(2+)</name>
        <dbReference type="ChEBI" id="CHEBI:18420"/>
        <label>2</label>
    </ligand>
</feature>
<protein>
    <recommendedName>
        <fullName evidence="1">Anthranilate phosphoribosyltransferase</fullName>
        <ecNumber evidence="1">2.4.2.18</ecNumber>
    </recommendedName>
</protein>
<accession>B8I0U9</accession>
<organism>
    <name type="scientific">Ruminiclostridium cellulolyticum (strain ATCC 35319 / DSM 5812 / JCM 6584 / H10)</name>
    <name type="common">Clostridium cellulolyticum</name>
    <dbReference type="NCBI Taxonomy" id="394503"/>
    <lineage>
        <taxon>Bacteria</taxon>
        <taxon>Bacillati</taxon>
        <taxon>Bacillota</taxon>
        <taxon>Clostridia</taxon>
        <taxon>Eubacteriales</taxon>
        <taxon>Oscillospiraceae</taxon>
        <taxon>Ruminiclostridium</taxon>
    </lineage>
</organism>
<proteinExistence type="inferred from homology"/>
<name>TRPD_RUMCH</name>
<dbReference type="EC" id="2.4.2.18" evidence="1"/>
<dbReference type="EMBL" id="CP001348">
    <property type="protein sequence ID" value="ACL77505.1"/>
    <property type="molecule type" value="Genomic_DNA"/>
</dbReference>
<dbReference type="RefSeq" id="WP_015926563.1">
    <property type="nucleotide sequence ID" value="NC_011898.1"/>
</dbReference>
<dbReference type="SMR" id="B8I0U9"/>
<dbReference type="STRING" id="394503.Ccel_3215"/>
<dbReference type="KEGG" id="cce:Ccel_3215"/>
<dbReference type="eggNOG" id="COG0547">
    <property type="taxonomic scope" value="Bacteria"/>
</dbReference>
<dbReference type="HOGENOM" id="CLU_034315_2_1_9"/>
<dbReference type="OrthoDB" id="9806430at2"/>
<dbReference type="UniPathway" id="UPA00035">
    <property type="reaction ID" value="UER00041"/>
</dbReference>
<dbReference type="Proteomes" id="UP000001349">
    <property type="component" value="Chromosome"/>
</dbReference>
<dbReference type="GO" id="GO:0005829">
    <property type="term" value="C:cytosol"/>
    <property type="evidence" value="ECO:0007669"/>
    <property type="project" value="TreeGrafter"/>
</dbReference>
<dbReference type="GO" id="GO:0004048">
    <property type="term" value="F:anthranilate phosphoribosyltransferase activity"/>
    <property type="evidence" value="ECO:0007669"/>
    <property type="project" value="UniProtKB-UniRule"/>
</dbReference>
<dbReference type="GO" id="GO:0000287">
    <property type="term" value="F:magnesium ion binding"/>
    <property type="evidence" value="ECO:0007669"/>
    <property type="project" value="UniProtKB-UniRule"/>
</dbReference>
<dbReference type="GO" id="GO:0000162">
    <property type="term" value="P:L-tryptophan biosynthetic process"/>
    <property type="evidence" value="ECO:0007669"/>
    <property type="project" value="UniProtKB-UniRule"/>
</dbReference>
<dbReference type="FunFam" id="3.40.1030.10:FF:000002">
    <property type="entry name" value="Anthranilate phosphoribosyltransferase"/>
    <property type="match status" value="1"/>
</dbReference>
<dbReference type="Gene3D" id="3.40.1030.10">
    <property type="entry name" value="Nucleoside phosphorylase/phosphoribosyltransferase catalytic domain"/>
    <property type="match status" value="1"/>
</dbReference>
<dbReference type="Gene3D" id="1.20.970.10">
    <property type="entry name" value="Transferase, Pyrimidine Nucleoside Phosphorylase, Chain C"/>
    <property type="match status" value="1"/>
</dbReference>
<dbReference type="HAMAP" id="MF_00211">
    <property type="entry name" value="TrpD"/>
    <property type="match status" value="1"/>
</dbReference>
<dbReference type="InterPro" id="IPR005940">
    <property type="entry name" value="Anthranilate_Pribosyl_Tfrase"/>
</dbReference>
<dbReference type="InterPro" id="IPR000312">
    <property type="entry name" value="Glycosyl_Trfase_fam3"/>
</dbReference>
<dbReference type="InterPro" id="IPR017459">
    <property type="entry name" value="Glycosyl_Trfase_fam3_N_dom"/>
</dbReference>
<dbReference type="InterPro" id="IPR036320">
    <property type="entry name" value="Glycosyl_Trfase_fam3_N_dom_sf"/>
</dbReference>
<dbReference type="InterPro" id="IPR035902">
    <property type="entry name" value="Nuc_phospho_transferase"/>
</dbReference>
<dbReference type="NCBIfam" id="TIGR01245">
    <property type="entry name" value="trpD"/>
    <property type="match status" value="1"/>
</dbReference>
<dbReference type="PANTHER" id="PTHR43285">
    <property type="entry name" value="ANTHRANILATE PHOSPHORIBOSYLTRANSFERASE"/>
    <property type="match status" value="1"/>
</dbReference>
<dbReference type="PANTHER" id="PTHR43285:SF2">
    <property type="entry name" value="ANTHRANILATE PHOSPHORIBOSYLTRANSFERASE"/>
    <property type="match status" value="1"/>
</dbReference>
<dbReference type="Pfam" id="PF02885">
    <property type="entry name" value="Glycos_trans_3N"/>
    <property type="match status" value="1"/>
</dbReference>
<dbReference type="Pfam" id="PF00591">
    <property type="entry name" value="Glycos_transf_3"/>
    <property type="match status" value="1"/>
</dbReference>
<dbReference type="SUPFAM" id="SSF52418">
    <property type="entry name" value="Nucleoside phosphorylase/phosphoribosyltransferase catalytic domain"/>
    <property type="match status" value="1"/>
</dbReference>
<dbReference type="SUPFAM" id="SSF47648">
    <property type="entry name" value="Nucleoside phosphorylase/phosphoribosyltransferase N-terminal domain"/>
    <property type="match status" value="1"/>
</dbReference>